<name>SMRB_YERPE</name>
<comment type="function">
    <text evidence="1">Acts as a ribosome collision sensor. Detects stalled/collided disomes (pairs of ribosomes where the leading ribosome is stalled and a second ribosome has collided with it) and endonucleolytically cleaves mRNA at the 5' boundary of the stalled ribosome. Stalled/collided disomes form a new interface (primarily via the 30S subunits) that binds SmrB. Cleaved mRNA becomes available for tmRNA ligation, leading to ribosomal subunit dissociation and rescue of stalled ribosomes.</text>
</comment>
<comment type="subunit">
    <text evidence="1">Associates with collided ribosomes, but not with correctly translating polysomes.</text>
</comment>
<comment type="similarity">
    <text evidence="1">Belongs to the SmrB family.</text>
</comment>
<comment type="sequence caution" evidence="2">
    <conflict type="erroneous initiation">
        <sequence resource="EMBL-CDS" id="AAM85152"/>
    </conflict>
    <text>Extended N-terminus.</text>
</comment>
<comment type="sequence caution" evidence="2">
    <conflict type="erroneous initiation">
        <sequence resource="EMBL-CDS" id="AAS62619"/>
    </conflict>
    <text>Extended N-terminus.</text>
</comment>
<sequence>MKKKYHLTPDELQLFKESIAGAKKLRQDTIVHHTPPKLGKKIAPERLLQEQVDASYYFSDEFQPLLDTDGPTRYVRPGVDNFEVKKLRRGDYSPEMFLDLHGLTQKQAKQELGALIAACKREHVHCACVMHGHGKHVLKQQTPLWMAQHPDVLAFHQAPKEWGGTAALLLLIELEE</sequence>
<keyword id="KW-0255">Endonuclease</keyword>
<keyword id="KW-0378">Hydrolase</keyword>
<keyword id="KW-0540">Nuclease</keyword>
<keyword id="KW-1185">Reference proteome</keyword>
<keyword id="KW-0694">RNA-binding</keyword>
<keyword id="KW-0699">rRNA-binding</keyword>
<reference key="1">
    <citation type="journal article" date="2001" name="Nature">
        <title>Genome sequence of Yersinia pestis, the causative agent of plague.</title>
        <authorList>
            <person name="Parkhill J."/>
            <person name="Wren B.W."/>
            <person name="Thomson N.R."/>
            <person name="Titball R.W."/>
            <person name="Holden M.T.G."/>
            <person name="Prentice M.B."/>
            <person name="Sebaihia M."/>
            <person name="James K.D."/>
            <person name="Churcher C.M."/>
            <person name="Mungall K.L."/>
            <person name="Baker S."/>
            <person name="Basham D."/>
            <person name="Bentley S.D."/>
            <person name="Brooks K."/>
            <person name="Cerdeno-Tarraga A.-M."/>
            <person name="Chillingworth T."/>
            <person name="Cronin A."/>
            <person name="Davies R.M."/>
            <person name="Davis P."/>
            <person name="Dougan G."/>
            <person name="Feltwell T."/>
            <person name="Hamlin N."/>
            <person name="Holroyd S."/>
            <person name="Jagels K."/>
            <person name="Karlyshev A.V."/>
            <person name="Leather S."/>
            <person name="Moule S."/>
            <person name="Oyston P.C.F."/>
            <person name="Quail M.A."/>
            <person name="Rutherford K.M."/>
            <person name="Simmonds M."/>
            <person name="Skelton J."/>
            <person name="Stevens K."/>
            <person name="Whitehead S."/>
            <person name="Barrell B.G."/>
        </authorList>
    </citation>
    <scope>NUCLEOTIDE SEQUENCE [LARGE SCALE GENOMIC DNA]</scope>
    <source>
        <strain>CO-92 / Biovar Orientalis</strain>
    </source>
</reference>
<reference key="2">
    <citation type="journal article" date="2002" name="J. Bacteriol.">
        <title>Genome sequence of Yersinia pestis KIM.</title>
        <authorList>
            <person name="Deng W."/>
            <person name="Burland V."/>
            <person name="Plunkett G. III"/>
            <person name="Boutin A."/>
            <person name="Mayhew G.F."/>
            <person name="Liss P."/>
            <person name="Perna N.T."/>
            <person name="Rose D.J."/>
            <person name="Mau B."/>
            <person name="Zhou S."/>
            <person name="Schwartz D.C."/>
            <person name="Fetherston J.D."/>
            <person name="Lindler L.E."/>
            <person name="Brubaker R.R."/>
            <person name="Plano G.V."/>
            <person name="Straley S.C."/>
            <person name="McDonough K.A."/>
            <person name="Nilles M.L."/>
            <person name="Matson J.S."/>
            <person name="Blattner F.R."/>
            <person name="Perry R.D."/>
        </authorList>
    </citation>
    <scope>NUCLEOTIDE SEQUENCE [LARGE SCALE GENOMIC DNA]</scope>
    <source>
        <strain>KIM10+ / Biovar Mediaevalis</strain>
    </source>
</reference>
<reference key="3">
    <citation type="journal article" date="2004" name="DNA Res.">
        <title>Complete genome sequence of Yersinia pestis strain 91001, an isolate avirulent to humans.</title>
        <authorList>
            <person name="Song Y."/>
            <person name="Tong Z."/>
            <person name="Wang J."/>
            <person name="Wang L."/>
            <person name="Guo Z."/>
            <person name="Han Y."/>
            <person name="Zhang J."/>
            <person name="Pei D."/>
            <person name="Zhou D."/>
            <person name="Qin H."/>
            <person name="Pang X."/>
            <person name="Han Y."/>
            <person name="Zhai J."/>
            <person name="Li M."/>
            <person name="Cui B."/>
            <person name="Qi Z."/>
            <person name="Jin L."/>
            <person name="Dai R."/>
            <person name="Chen F."/>
            <person name="Li S."/>
            <person name="Ye C."/>
            <person name="Du Z."/>
            <person name="Lin W."/>
            <person name="Wang J."/>
            <person name="Yu J."/>
            <person name="Yang H."/>
            <person name="Wang J."/>
            <person name="Huang P."/>
            <person name="Yang R."/>
        </authorList>
    </citation>
    <scope>NUCLEOTIDE SEQUENCE [LARGE SCALE GENOMIC DNA]</scope>
    <source>
        <strain>91001 / Biovar Mediaevalis</strain>
    </source>
</reference>
<gene>
    <name evidence="1" type="primary">smrB</name>
    <name type="ordered locus">YPO2749</name>
    <name type="ordered locus">y1583</name>
    <name type="ordered locus">YP_2414</name>
</gene>
<protein>
    <recommendedName>
        <fullName evidence="1">Ribosome rescue factor SmrB</fullName>
        <ecNumber evidence="1">3.1.-.-</ecNumber>
    </recommendedName>
</protein>
<organism>
    <name type="scientific">Yersinia pestis</name>
    <dbReference type="NCBI Taxonomy" id="632"/>
    <lineage>
        <taxon>Bacteria</taxon>
        <taxon>Pseudomonadati</taxon>
        <taxon>Pseudomonadota</taxon>
        <taxon>Gammaproteobacteria</taxon>
        <taxon>Enterobacterales</taxon>
        <taxon>Yersiniaceae</taxon>
        <taxon>Yersinia</taxon>
    </lineage>
</organism>
<proteinExistence type="inferred from homology"/>
<evidence type="ECO:0000255" key="1">
    <source>
        <dbReference type="HAMAP-Rule" id="MF_01042"/>
    </source>
</evidence>
<evidence type="ECO:0000305" key="2"/>
<dbReference type="EC" id="3.1.-.-" evidence="1"/>
<dbReference type="EMBL" id="AL590842">
    <property type="protein sequence ID" value="CAL21368.1"/>
    <property type="molecule type" value="Genomic_DNA"/>
</dbReference>
<dbReference type="EMBL" id="AE009952">
    <property type="protein sequence ID" value="AAM85152.1"/>
    <property type="status" value="ALT_INIT"/>
    <property type="molecule type" value="Genomic_DNA"/>
</dbReference>
<dbReference type="EMBL" id="AE017042">
    <property type="protein sequence ID" value="AAS62619.1"/>
    <property type="status" value="ALT_INIT"/>
    <property type="molecule type" value="Genomic_DNA"/>
</dbReference>
<dbReference type="PIR" id="AE0335">
    <property type="entry name" value="AE0335"/>
</dbReference>
<dbReference type="RefSeq" id="WP_002227846.1">
    <property type="nucleotide sequence ID" value="NZ_WUCM01000012.1"/>
</dbReference>
<dbReference type="RefSeq" id="YP_002347696.1">
    <property type="nucleotide sequence ID" value="NC_003143.1"/>
</dbReference>
<dbReference type="SMR" id="Q8ZD43"/>
<dbReference type="STRING" id="214092.YPO2749"/>
<dbReference type="PaxDb" id="214092-YPO2749"/>
<dbReference type="DNASU" id="1146530"/>
<dbReference type="EnsemblBacteria" id="AAS62619">
    <property type="protein sequence ID" value="AAS62619"/>
    <property type="gene ID" value="YP_2414"/>
</dbReference>
<dbReference type="GeneID" id="57975940"/>
<dbReference type="KEGG" id="ype:YPO2749"/>
<dbReference type="KEGG" id="ypj:CH55_9"/>
<dbReference type="KEGG" id="ypk:y1583"/>
<dbReference type="KEGG" id="ypl:CH46_2352"/>
<dbReference type="KEGG" id="ypm:YP_2414"/>
<dbReference type="KEGG" id="ypv:BZ15_776"/>
<dbReference type="KEGG" id="ypw:CH59_3636"/>
<dbReference type="PATRIC" id="fig|214092.21.peg.3193"/>
<dbReference type="eggNOG" id="COG2840">
    <property type="taxonomic scope" value="Bacteria"/>
</dbReference>
<dbReference type="HOGENOM" id="CLU_055978_4_0_6"/>
<dbReference type="OMA" id="CIMHGHG"/>
<dbReference type="OrthoDB" id="5795446at2"/>
<dbReference type="Proteomes" id="UP000000815">
    <property type="component" value="Chromosome"/>
</dbReference>
<dbReference type="Proteomes" id="UP000001019">
    <property type="component" value="Chromosome"/>
</dbReference>
<dbReference type="Proteomes" id="UP000002490">
    <property type="component" value="Chromosome"/>
</dbReference>
<dbReference type="GO" id="GO:0004521">
    <property type="term" value="F:RNA endonuclease activity"/>
    <property type="evidence" value="ECO:0007669"/>
    <property type="project" value="UniProtKB-UniRule"/>
</dbReference>
<dbReference type="GO" id="GO:0019843">
    <property type="term" value="F:rRNA binding"/>
    <property type="evidence" value="ECO:0007669"/>
    <property type="project" value="UniProtKB-UniRule"/>
</dbReference>
<dbReference type="GO" id="GO:0072344">
    <property type="term" value="P:rescue of stalled ribosome"/>
    <property type="evidence" value="ECO:0007669"/>
    <property type="project" value="UniProtKB-UniRule"/>
</dbReference>
<dbReference type="Gene3D" id="3.30.1370.110">
    <property type="match status" value="1"/>
</dbReference>
<dbReference type="HAMAP" id="MF_01042">
    <property type="entry name" value="SmrB"/>
    <property type="match status" value="1"/>
</dbReference>
<dbReference type="InterPro" id="IPR002625">
    <property type="entry name" value="Smr_dom"/>
</dbReference>
<dbReference type="InterPro" id="IPR036063">
    <property type="entry name" value="Smr_dom_sf"/>
</dbReference>
<dbReference type="InterPro" id="IPR022990">
    <property type="entry name" value="SmrB-like"/>
</dbReference>
<dbReference type="NCBIfam" id="NF003432">
    <property type="entry name" value="PRK04946.1"/>
    <property type="match status" value="1"/>
</dbReference>
<dbReference type="PANTHER" id="PTHR35562">
    <property type="entry name" value="DNA ENDONUCLEASE SMRA-RELATED"/>
    <property type="match status" value="1"/>
</dbReference>
<dbReference type="PANTHER" id="PTHR35562:SF1">
    <property type="entry name" value="UPF0115 PROTEIN YFCN"/>
    <property type="match status" value="1"/>
</dbReference>
<dbReference type="Pfam" id="PF01713">
    <property type="entry name" value="Smr"/>
    <property type="match status" value="1"/>
</dbReference>
<dbReference type="SMART" id="SM00463">
    <property type="entry name" value="SMR"/>
    <property type="match status" value="1"/>
</dbReference>
<dbReference type="SUPFAM" id="SSF160443">
    <property type="entry name" value="SMR domain-like"/>
    <property type="match status" value="1"/>
</dbReference>
<dbReference type="PROSITE" id="PS50828">
    <property type="entry name" value="SMR"/>
    <property type="match status" value="1"/>
</dbReference>
<feature type="chain" id="PRO_0000214567" description="Ribosome rescue factor SmrB">
    <location>
        <begin position="1"/>
        <end position="176"/>
    </location>
</feature>
<feature type="domain" description="Smr" evidence="1">
    <location>
        <begin position="98"/>
        <end position="173"/>
    </location>
</feature>
<accession>Q8ZD43</accession>
<accession>Q0WDE2</accession>